<feature type="signal peptide" evidence="2">
    <location>
        <begin position="1"/>
        <end position="23"/>
    </location>
</feature>
<feature type="chain" id="PRO_0000184065" description="Beta-1,4-xylanase">
    <location>
        <begin position="24"/>
        <end position="352"/>
    </location>
</feature>
<feature type="domain" description="GH10" evidence="3">
    <location>
        <begin position="29"/>
        <end position="352"/>
    </location>
</feature>
<feature type="active site" description="Proton donor" evidence="1">
    <location>
        <position position="155"/>
    </location>
</feature>
<feature type="active site" description="Nucleophile" evidence="1">
    <location>
        <position position="262"/>
    </location>
</feature>
<evidence type="ECO:0000250" key="1"/>
<evidence type="ECO:0000255" key="2"/>
<evidence type="ECO:0000255" key="3">
    <source>
        <dbReference type="PROSITE-ProRule" id="PRU01096"/>
    </source>
</evidence>
<evidence type="ECO:0000305" key="4"/>
<comment type="catalytic activity">
    <reaction>
        <text>Endohydrolysis of (1-&gt;4)-beta-D-xylosidic linkages in xylans.</text>
        <dbReference type="EC" id="3.2.1.8"/>
    </reaction>
</comment>
<comment type="pathway">
    <text>Glycan degradation; xylan degradation.</text>
</comment>
<comment type="subcellular location">
    <subcellularLocation>
        <location evidence="1">Secreted</location>
    </subcellularLocation>
</comment>
<comment type="similarity">
    <text evidence="4">Belongs to the glycosyl hydrolase 10 (cellulase F) family.</text>
</comment>
<accession>Q12603</accession>
<keyword id="KW-0119">Carbohydrate metabolism</keyword>
<keyword id="KW-0326">Glycosidase</keyword>
<keyword id="KW-0378">Hydrolase</keyword>
<keyword id="KW-0624">Polysaccharide degradation</keyword>
<keyword id="KW-0964">Secreted</keyword>
<keyword id="KW-0732">Signal</keyword>
<keyword id="KW-0858">Xylan degradation</keyword>
<sequence length="352" mass="41486">MINQRFSILVLLLILLTFSLGFLKEEAKGMEIPSLKEVYKDYFTIGAAVSHLNIYHYENLLKKHFNSLTPENQMKWEVIHPKPYVYDFGPADEIVDFAMKNGMKVRGHTLVWHNQTPGWVYAGTKDEILARLKEHIKEVVGHYKGKVYAWDVVNEALSDNPNEFLRRAPWYDICGEEVIEKAFIWAHEVDPDAKLFYNDYNLEDPIKREKAYKLVKKLKDKGVPIHGIGIQGHWTLAWPTPKMLEDSIKRFAELGVEVQVTEFDISIYYDRNENNNFKVPPEDRLERQAQLYKEAFEILRKYKGIVTGVTFWGVADDYTWLYFWPVRGREDYPLLFDKNHNPKKAFWEIVKF</sequence>
<proteinExistence type="inferred from homology"/>
<dbReference type="EC" id="3.2.1.8"/>
<dbReference type="EMBL" id="L39866">
    <property type="protein sequence ID" value="AAA96979.1"/>
    <property type="molecule type" value="Genomic_DNA"/>
</dbReference>
<dbReference type="PIR" id="T08469">
    <property type="entry name" value="T08469"/>
</dbReference>
<dbReference type="SMR" id="Q12603"/>
<dbReference type="CAZy" id="GH10">
    <property type="family name" value="Glycoside Hydrolase Family 10"/>
</dbReference>
<dbReference type="UniPathway" id="UPA00114"/>
<dbReference type="GO" id="GO:0005576">
    <property type="term" value="C:extracellular region"/>
    <property type="evidence" value="ECO:0007669"/>
    <property type="project" value="UniProtKB-SubCell"/>
</dbReference>
<dbReference type="GO" id="GO:0031176">
    <property type="term" value="F:endo-1,4-beta-xylanase activity"/>
    <property type="evidence" value="ECO:0007669"/>
    <property type="project" value="UniProtKB-EC"/>
</dbReference>
<dbReference type="GO" id="GO:0045493">
    <property type="term" value="P:xylan catabolic process"/>
    <property type="evidence" value="ECO:0007669"/>
    <property type="project" value="UniProtKB-UniPathway"/>
</dbReference>
<dbReference type="Gene3D" id="3.20.20.80">
    <property type="entry name" value="Glycosidases"/>
    <property type="match status" value="1"/>
</dbReference>
<dbReference type="InterPro" id="IPR044846">
    <property type="entry name" value="GH10"/>
</dbReference>
<dbReference type="InterPro" id="IPR001000">
    <property type="entry name" value="GH10_dom"/>
</dbReference>
<dbReference type="InterPro" id="IPR017853">
    <property type="entry name" value="Glycoside_hydrolase_SF"/>
</dbReference>
<dbReference type="PANTHER" id="PTHR31490:SF90">
    <property type="entry name" value="ENDO-1,4-BETA-XYLANASE A"/>
    <property type="match status" value="1"/>
</dbReference>
<dbReference type="PANTHER" id="PTHR31490">
    <property type="entry name" value="GLYCOSYL HYDROLASE"/>
    <property type="match status" value="1"/>
</dbReference>
<dbReference type="Pfam" id="PF00331">
    <property type="entry name" value="Glyco_hydro_10"/>
    <property type="match status" value="1"/>
</dbReference>
<dbReference type="PRINTS" id="PR00134">
    <property type="entry name" value="GLHYDRLASE10"/>
</dbReference>
<dbReference type="SMART" id="SM00633">
    <property type="entry name" value="Glyco_10"/>
    <property type="match status" value="1"/>
</dbReference>
<dbReference type="SUPFAM" id="SSF51445">
    <property type="entry name" value="(Trans)glycosidases"/>
    <property type="match status" value="1"/>
</dbReference>
<dbReference type="PROSITE" id="PS51760">
    <property type="entry name" value="GH10_2"/>
    <property type="match status" value="1"/>
</dbReference>
<organism>
    <name type="scientific">Dictyoglomus thermophilum</name>
    <dbReference type="NCBI Taxonomy" id="14"/>
    <lineage>
        <taxon>Bacteria</taxon>
        <taxon>Pseudomonadati</taxon>
        <taxon>Dictyoglomota</taxon>
        <taxon>Dictyoglomia</taxon>
        <taxon>Dictyoglomales</taxon>
        <taxon>Dictyoglomaceae</taxon>
        <taxon>Dictyoglomus</taxon>
    </lineage>
</organism>
<gene>
    <name type="primary">xynA</name>
</gene>
<reference key="1">
    <citation type="journal article" date="1995" name="Appl. Environ. Microbiol.">
        <title>Cloning, sequencing, and expression of a xylanase gene from the extreme thermophile Dictyoglomus thermophilum Rt46B.1 and activity of the enzyme on fiber-bound substrate.</title>
        <authorList>
            <person name="Gibbs M.D."/>
            <person name="Reeves R.A."/>
            <person name="Bergquist P.L."/>
        </authorList>
    </citation>
    <scope>NUCLEOTIDE SEQUENCE [GENOMIC DNA]</scope>
    <source>
        <strain>Rt46 B.1</strain>
    </source>
</reference>
<name>XYNA_DICTH</name>
<protein>
    <recommendedName>
        <fullName>Beta-1,4-xylanase</fullName>
        <ecNumber>3.2.1.8</ecNumber>
    </recommendedName>
    <alternativeName>
        <fullName>1,4-beta-D-xylan xylanohydrolase</fullName>
    </alternativeName>
    <alternativeName>
        <fullName>Endo-1,4-beta-xylanase</fullName>
    </alternativeName>
</protein>